<sequence>MPTKKNNFEEQLNELEKIVTNLENGNVPLEDALKEFQEGVKISRDLDKKLTNAEQTVAKLIDSDGTEHNLDPNNASAPEE</sequence>
<gene>
    <name evidence="1" type="primary">xseB</name>
    <name type="ordered locus">LBA1330</name>
</gene>
<name>EX7S_LACAC</name>
<proteinExistence type="inferred from homology"/>
<keyword id="KW-0963">Cytoplasm</keyword>
<keyword id="KW-0269">Exonuclease</keyword>
<keyword id="KW-0378">Hydrolase</keyword>
<keyword id="KW-0540">Nuclease</keyword>
<keyword id="KW-1185">Reference proteome</keyword>
<organism>
    <name type="scientific">Lactobacillus acidophilus (strain ATCC 700396 / NCK56 / N2 / NCFM)</name>
    <dbReference type="NCBI Taxonomy" id="272621"/>
    <lineage>
        <taxon>Bacteria</taxon>
        <taxon>Bacillati</taxon>
        <taxon>Bacillota</taxon>
        <taxon>Bacilli</taxon>
        <taxon>Lactobacillales</taxon>
        <taxon>Lactobacillaceae</taxon>
        <taxon>Lactobacillus</taxon>
    </lineage>
</organism>
<reference key="1">
    <citation type="journal article" date="2005" name="Proc. Natl. Acad. Sci. U.S.A.">
        <title>Complete genome sequence of the probiotic lactic acid bacterium Lactobacillus acidophilus NCFM.</title>
        <authorList>
            <person name="Altermann E."/>
            <person name="Russell W.M."/>
            <person name="Azcarate-Peril M.A."/>
            <person name="Barrangou R."/>
            <person name="Buck B.L."/>
            <person name="McAuliffe O."/>
            <person name="Souther N."/>
            <person name="Dobson A."/>
            <person name="Duong T."/>
            <person name="Callanan M."/>
            <person name="Lick S."/>
            <person name="Hamrick A."/>
            <person name="Cano R."/>
            <person name="Klaenhammer T.R."/>
        </authorList>
    </citation>
    <scope>NUCLEOTIDE SEQUENCE [LARGE SCALE GENOMIC DNA]</scope>
    <source>
        <strain>ATCC 700396 / NCK56 / N2 / NCFM</strain>
    </source>
</reference>
<comment type="function">
    <text evidence="1">Bidirectionally degrades single-stranded DNA into large acid-insoluble oligonucleotides, which are then degraded further into small acid-soluble oligonucleotides.</text>
</comment>
<comment type="catalytic activity">
    <reaction evidence="1">
        <text>Exonucleolytic cleavage in either 5'- to 3'- or 3'- to 5'-direction to yield nucleoside 5'-phosphates.</text>
        <dbReference type="EC" id="3.1.11.6"/>
    </reaction>
</comment>
<comment type="subunit">
    <text evidence="1">Heterooligomer composed of large and small subunits.</text>
</comment>
<comment type="subcellular location">
    <subcellularLocation>
        <location evidence="1">Cytoplasm</location>
    </subcellularLocation>
</comment>
<comment type="similarity">
    <text evidence="1">Belongs to the XseB family.</text>
</comment>
<accession>Q5FJG7</accession>
<feature type="chain" id="PRO_0000206957" description="Exodeoxyribonuclease 7 small subunit">
    <location>
        <begin position="1"/>
        <end position="80"/>
    </location>
</feature>
<feature type="region of interest" description="Disordered" evidence="2">
    <location>
        <begin position="60"/>
        <end position="80"/>
    </location>
</feature>
<feature type="compositionally biased region" description="Basic and acidic residues" evidence="2">
    <location>
        <begin position="61"/>
        <end position="70"/>
    </location>
</feature>
<feature type="compositionally biased region" description="Polar residues" evidence="2">
    <location>
        <begin position="71"/>
        <end position="80"/>
    </location>
</feature>
<protein>
    <recommendedName>
        <fullName evidence="1">Exodeoxyribonuclease 7 small subunit</fullName>
        <ecNumber evidence="1">3.1.11.6</ecNumber>
    </recommendedName>
    <alternativeName>
        <fullName evidence="1">Exodeoxyribonuclease VII small subunit</fullName>
        <shortName evidence="1">Exonuclease VII small subunit</shortName>
    </alternativeName>
</protein>
<evidence type="ECO:0000255" key="1">
    <source>
        <dbReference type="HAMAP-Rule" id="MF_00337"/>
    </source>
</evidence>
<evidence type="ECO:0000256" key="2">
    <source>
        <dbReference type="SAM" id="MobiDB-lite"/>
    </source>
</evidence>
<dbReference type="EC" id="3.1.11.6" evidence="1"/>
<dbReference type="EMBL" id="CP000033">
    <property type="protein sequence ID" value="AAV43157.1"/>
    <property type="molecule type" value="Genomic_DNA"/>
</dbReference>
<dbReference type="RefSeq" id="WP_003547938.1">
    <property type="nucleotide sequence ID" value="NC_006814.3"/>
</dbReference>
<dbReference type="RefSeq" id="YP_194188.1">
    <property type="nucleotide sequence ID" value="NC_006814.3"/>
</dbReference>
<dbReference type="SMR" id="Q5FJG7"/>
<dbReference type="STRING" id="272621.LBA1330"/>
<dbReference type="KEGG" id="lac:LBA1330"/>
<dbReference type="PATRIC" id="fig|272621.13.peg.1258"/>
<dbReference type="eggNOG" id="COG1722">
    <property type="taxonomic scope" value="Bacteria"/>
</dbReference>
<dbReference type="HOGENOM" id="CLU_145918_3_2_9"/>
<dbReference type="OrthoDB" id="9798666at2"/>
<dbReference type="BioCyc" id="LACI272621:G1G49-1307-MONOMER"/>
<dbReference type="Proteomes" id="UP000006381">
    <property type="component" value="Chromosome"/>
</dbReference>
<dbReference type="GO" id="GO:0005829">
    <property type="term" value="C:cytosol"/>
    <property type="evidence" value="ECO:0007669"/>
    <property type="project" value="TreeGrafter"/>
</dbReference>
<dbReference type="GO" id="GO:0009318">
    <property type="term" value="C:exodeoxyribonuclease VII complex"/>
    <property type="evidence" value="ECO:0007669"/>
    <property type="project" value="InterPro"/>
</dbReference>
<dbReference type="GO" id="GO:0008855">
    <property type="term" value="F:exodeoxyribonuclease VII activity"/>
    <property type="evidence" value="ECO:0007669"/>
    <property type="project" value="UniProtKB-UniRule"/>
</dbReference>
<dbReference type="GO" id="GO:0006308">
    <property type="term" value="P:DNA catabolic process"/>
    <property type="evidence" value="ECO:0007669"/>
    <property type="project" value="UniProtKB-UniRule"/>
</dbReference>
<dbReference type="Gene3D" id="1.10.287.1040">
    <property type="entry name" value="Exonuclease VII, small subunit"/>
    <property type="match status" value="1"/>
</dbReference>
<dbReference type="HAMAP" id="MF_00337">
    <property type="entry name" value="Exonuc_7_S"/>
    <property type="match status" value="1"/>
</dbReference>
<dbReference type="InterPro" id="IPR003761">
    <property type="entry name" value="Exonuc_VII_S"/>
</dbReference>
<dbReference type="InterPro" id="IPR037004">
    <property type="entry name" value="Exonuc_VII_ssu_sf"/>
</dbReference>
<dbReference type="NCBIfam" id="NF002138">
    <property type="entry name" value="PRK00977.1-2"/>
    <property type="match status" value="1"/>
</dbReference>
<dbReference type="NCBIfam" id="NF002140">
    <property type="entry name" value="PRK00977.1-4"/>
    <property type="match status" value="1"/>
</dbReference>
<dbReference type="NCBIfam" id="TIGR01280">
    <property type="entry name" value="xseB"/>
    <property type="match status" value="1"/>
</dbReference>
<dbReference type="PANTHER" id="PTHR34137">
    <property type="entry name" value="EXODEOXYRIBONUCLEASE 7 SMALL SUBUNIT"/>
    <property type="match status" value="1"/>
</dbReference>
<dbReference type="PANTHER" id="PTHR34137:SF1">
    <property type="entry name" value="EXODEOXYRIBONUCLEASE 7 SMALL SUBUNIT"/>
    <property type="match status" value="1"/>
</dbReference>
<dbReference type="Pfam" id="PF02609">
    <property type="entry name" value="Exonuc_VII_S"/>
    <property type="match status" value="1"/>
</dbReference>
<dbReference type="PIRSF" id="PIRSF006488">
    <property type="entry name" value="Exonuc_VII_S"/>
    <property type="match status" value="1"/>
</dbReference>
<dbReference type="SUPFAM" id="SSF116842">
    <property type="entry name" value="XseB-like"/>
    <property type="match status" value="1"/>
</dbReference>